<keyword id="KW-0066">ATP synthesis</keyword>
<keyword id="KW-0997">Cell inner membrane</keyword>
<keyword id="KW-1003">Cell membrane</keyword>
<keyword id="KW-0139">CF(1)</keyword>
<keyword id="KW-0375">Hydrogen ion transport</keyword>
<keyword id="KW-0406">Ion transport</keyword>
<keyword id="KW-0472">Membrane</keyword>
<keyword id="KW-0813">Transport</keyword>
<dbReference type="EMBL" id="AM933172">
    <property type="protein sequence ID" value="CAR35258.1"/>
    <property type="molecule type" value="Genomic_DNA"/>
</dbReference>
<dbReference type="RefSeq" id="WP_001288957.1">
    <property type="nucleotide sequence ID" value="NC_011294.1"/>
</dbReference>
<dbReference type="SMR" id="B5QUS7"/>
<dbReference type="KEGG" id="set:SEN3682"/>
<dbReference type="HOGENOM" id="CLU_085114_3_0_6"/>
<dbReference type="Proteomes" id="UP000000613">
    <property type="component" value="Chromosome"/>
</dbReference>
<dbReference type="GO" id="GO:0005886">
    <property type="term" value="C:plasma membrane"/>
    <property type="evidence" value="ECO:0007669"/>
    <property type="project" value="UniProtKB-SubCell"/>
</dbReference>
<dbReference type="GO" id="GO:0045259">
    <property type="term" value="C:proton-transporting ATP synthase complex"/>
    <property type="evidence" value="ECO:0007669"/>
    <property type="project" value="UniProtKB-KW"/>
</dbReference>
<dbReference type="GO" id="GO:0046933">
    <property type="term" value="F:proton-transporting ATP synthase activity, rotational mechanism"/>
    <property type="evidence" value="ECO:0007669"/>
    <property type="project" value="UniProtKB-UniRule"/>
</dbReference>
<dbReference type="FunFam" id="1.10.520.20:FF:000001">
    <property type="entry name" value="ATP synthase subunit delta"/>
    <property type="match status" value="1"/>
</dbReference>
<dbReference type="Gene3D" id="1.10.520.20">
    <property type="entry name" value="N-terminal domain of the delta subunit of the F1F0-ATP synthase"/>
    <property type="match status" value="1"/>
</dbReference>
<dbReference type="HAMAP" id="MF_01416">
    <property type="entry name" value="ATP_synth_delta_bact"/>
    <property type="match status" value="1"/>
</dbReference>
<dbReference type="InterPro" id="IPR026015">
    <property type="entry name" value="ATP_synth_OSCP/delta_N_sf"/>
</dbReference>
<dbReference type="InterPro" id="IPR020781">
    <property type="entry name" value="ATPase_OSCP/d_CS"/>
</dbReference>
<dbReference type="InterPro" id="IPR000711">
    <property type="entry name" value="ATPase_OSCP/dsu"/>
</dbReference>
<dbReference type="NCBIfam" id="TIGR01145">
    <property type="entry name" value="ATP_synt_delta"/>
    <property type="match status" value="1"/>
</dbReference>
<dbReference type="NCBIfam" id="NF004402">
    <property type="entry name" value="PRK05758.2-2"/>
    <property type="match status" value="1"/>
</dbReference>
<dbReference type="NCBIfam" id="NF004404">
    <property type="entry name" value="PRK05758.2-5"/>
    <property type="match status" value="1"/>
</dbReference>
<dbReference type="PANTHER" id="PTHR11910">
    <property type="entry name" value="ATP SYNTHASE DELTA CHAIN"/>
    <property type="match status" value="1"/>
</dbReference>
<dbReference type="Pfam" id="PF00213">
    <property type="entry name" value="OSCP"/>
    <property type="match status" value="1"/>
</dbReference>
<dbReference type="PRINTS" id="PR00125">
    <property type="entry name" value="ATPASEDELTA"/>
</dbReference>
<dbReference type="SUPFAM" id="SSF47928">
    <property type="entry name" value="N-terminal domain of the delta subunit of the F1F0-ATP synthase"/>
    <property type="match status" value="1"/>
</dbReference>
<dbReference type="PROSITE" id="PS00389">
    <property type="entry name" value="ATPASE_DELTA"/>
    <property type="match status" value="1"/>
</dbReference>
<comment type="function">
    <text evidence="1">F(1)F(0) ATP synthase produces ATP from ADP in the presence of a proton or sodium gradient. F-type ATPases consist of two structural domains, F(1) containing the extramembraneous catalytic core and F(0) containing the membrane proton channel, linked together by a central stalk and a peripheral stalk. During catalysis, ATP synthesis in the catalytic domain of F(1) is coupled via a rotary mechanism of the central stalk subunits to proton translocation.</text>
</comment>
<comment type="function">
    <text evidence="1">This protein is part of the stalk that links CF(0) to CF(1). It either transmits conformational changes from CF(0) to CF(1) or is implicated in proton conduction.</text>
</comment>
<comment type="subunit">
    <text evidence="1">F-type ATPases have 2 components, F(1) - the catalytic core - and F(0) - the membrane proton channel. F(1) has five subunits: alpha(3), beta(3), gamma(1), delta(1), epsilon(1). F(0) has three main subunits: a(1), b(2) and c(10-14). The alpha and beta chains form an alternating ring which encloses part of the gamma chain. F(1) is attached to F(0) by a central stalk formed by the gamma and epsilon chains, while a peripheral stalk is formed by the delta and b chains.</text>
</comment>
<comment type="subcellular location">
    <subcellularLocation>
        <location evidence="1">Cell inner membrane</location>
        <topology evidence="1">Peripheral membrane protein</topology>
    </subcellularLocation>
</comment>
<comment type="similarity">
    <text evidence="1">Belongs to the ATPase delta chain family.</text>
</comment>
<sequence>MSEFVTVARPYAKAAFDFAVEHQSVERWQDMLAFAAEVTKNEQMAELLSGALAPETLAESFIAVCGEQLDENGQNLIRVMAENNRLNALPDVLEQFIHLRAASEATSEVEVTSATALSEEQLSKISAAMEKRLSRKVKLNCKIDKSVMAGVIIRAGDMVIDGSVRGRLERLADVLQS</sequence>
<reference key="1">
    <citation type="journal article" date="2008" name="Genome Res.">
        <title>Comparative genome analysis of Salmonella enteritidis PT4 and Salmonella gallinarum 287/91 provides insights into evolutionary and host adaptation pathways.</title>
        <authorList>
            <person name="Thomson N.R."/>
            <person name="Clayton D.J."/>
            <person name="Windhorst D."/>
            <person name="Vernikos G."/>
            <person name="Davidson S."/>
            <person name="Churcher C."/>
            <person name="Quail M.A."/>
            <person name="Stevens M."/>
            <person name="Jones M.A."/>
            <person name="Watson M."/>
            <person name="Barron A."/>
            <person name="Layton A."/>
            <person name="Pickard D."/>
            <person name="Kingsley R.A."/>
            <person name="Bignell A."/>
            <person name="Clark L."/>
            <person name="Harris B."/>
            <person name="Ormond D."/>
            <person name="Abdellah Z."/>
            <person name="Brooks K."/>
            <person name="Cherevach I."/>
            <person name="Chillingworth T."/>
            <person name="Woodward J."/>
            <person name="Norberczak H."/>
            <person name="Lord A."/>
            <person name="Arrowsmith C."/>
            <person name="Jagels K."/>
            <person name="Moule S."/>
            <person name="Mungall K."/>
            <person name="Saunders M."/>
            <person name="Whitehead S."/>
            <person name="Chabalgoity J.A."/>
            <person name="Maskell D."/>
            <person name="Humphreys T."/>
            <person name="Roberts M."/>
            <person name="Barrow P.A."/>
            <person name="Dougan G."/>
            <person name="Parkhill J."/>
        </authorList>
    </citation>
    <scope>NUCLEOTIDE SEQUENCE [LARGE SCALE GENOMIC DNA]</scope>
    <source>
        <strain>P125109</strain>
    </source>
</reference>
<proteinExistence type="inferred from homology"/>
<name>ATPD_SALEP</name>
<feature type="chain" id="PRO_0000371115" description="ATP synthase subunit delta">
    <location>
        <begin position="1"/>
        <end position="177"/>
    </location>
</feature>
<accession>B5QUS7</accession>
<gene>
    <name evidence="1" type="primary">atpH</name>
    <name type="ordered locus">SEN3682</name>
</gene>
<protein>
    <recommendedName>
        <fullName evidence="1">ATP synthase subunit delta</fullName>
    </recommendedName>
    <alternativeName>
        <fullName evidence="1">ATP synthase F(1) sector subunit delta</fullName>
    </alternativeName>
    <alternativeName>
        <fullName evidence="1">F-type ATPase subunit delta</fullName>
        <shortName evidence="1">F-ATPase subunit delta</shortName>
    </alternativeName>
</protein>
<evidence type="ECO:0000255" key="1">
    <source>
        <dbReference type="HAMAP-Rule" id="MF_01416"/>
    </source>
</evidence>
<organism>
    <name type="scientific">Salmonella enteritidis PT4 (strain P125109)</name>
    <dbReference type="NCBI Taxonomy" id="550537"/>
    <lineage>
        <taxon>Bacteria</taxon>
        <taxon>Pseudomonadati</taxon>
        <taxon>Pseudomonadota</taxon>
        <taxon>Gammaproteobacteria</taxon>
        <taxon>Enterobacterales</taxon>
        <taxon>Enterobacteriaceae</taxon>
        <taxon>Salmonella</taxon>
    </lineage>
</organism>